<accession>A0JVK5</accession>
<evidence type="ECO:0000255" key="1">
    <source>
        <dbReference type="HAMAP-Rule" id="MF_01013"/>
    </source>
</evidence>
<feature type="chain" id="PRO_1000063023" description="Imidazole glycerol phosphate synthase subunit HisF">
    <location>
        <begin position="1"/>
        <end position="258"/>
    </location>
</feature>
<feature type="active site" evidence="1">
    <location>
        <position position="12"/>
    </location>
</feature>
<feature type="active site" evidence="1">
    <location>
        <position position="131"/>
    </location>
</feature>
<comment type="function">
    <text evidence="1">IGPS catalyzes the conversion of PRFAR and glutamine to IGP, AICAR and glutamate. The HisF subunit catalyzes the cyclization activity that produces IGP and AICAR from PRFAR using the ammonia provided by the HisH subunit.</text>
</comment>
<comment type="catalytic activity">
    <reaction evidence="1">
        <text>5-[(5-phospho-1-deoxy-D-ribulos-1-ylimino)methylamino]-1-(5-phospho-beta-D-ribosyl)imidazole-4-carboxamide + L-glutamine = D-erythro-1-(imidazol-4-yl)glycerol 3-phosphate + 5-amino-1-(5-phospho-beta-D-ribosyl)imidazole-4-carboxamide + L-glutamate + H(+)</text>
        <dbReference type="Rhea" id="RHEA:24793"/>
        <dbReference type="ChEBI" id="CHEBI:15378"/>
        <dbReference type="ChEBI" id="CHEBI:29985"/>
        <dbReference type="ChEBI" id="CHEBI:58278"/>
        <dbReference type="ChEBI" id="CHEBI:58359"/>
        <dbReference type="ChEBI" id="CHEBI:58475"/>
        <dbReference type="ChEBI" id="CHEBI:58525"/>
        <dbReference type="EC" id="4.3.2.10"/>
    </reaction>
</comment>
<comment type="pathway">
    <text evidence="1">Amino-acid biosynthesis; L-histidine biosynthesis; L-histidine from 5-phospho-alpha-D-ribose 1-diphosphate: step 5/9.</text>
</comment>
<comment type="subunit">
    <text evidence="1">Heterodimer of HisH and HisF.</text>
</comment>
<comment type="subcellular location">
    <subcellularLocation>
        <location evidence="1">Cytoplasm</location>
    </subcellularLocation>
</comment>
<comment type="similarity">
    <text evidence="1">Belongs to the HisA/HisF family.</text>
</comment>
<name>HIS6_ARTS2</name>
<protein>
    <recommendedName>
        <fullName evidence="1">Imidazole glycerol phosphate synthase subunit HisF</fullName>
        <ecNumber evidence="1">4.3.2.10</ecNumber>
    </recommendedName>
    <alternativeName>
        <fullName evidence="1">IGP synthase cyclase subunit</fullName>
    </alternativeName>
    <alternativeName>
        <fullName evidence="1">IGP synthase subunit HisF</fullName>
    </alternativeName>
    <alternativeName>
        <fullName evidence="1">ImGP synthase subunit HisF</fullName>
        <shortName evidence="1">IGPS subunit HisF</shortName>
    </alternativeName>
</protein>
<proteinExistence type="inferred from homology"/>
<sequence length="258" mass="27182">MAVAVRVIPCLDVDAGRVVKGINFEGLRDAGDPVELAHRYDNGGADELTFLDVTASSGNRETTFDVVRRTAEEVFIPLTVGGGVRGVAEVDKLLRYGADKASINTAAVARPDVIDEITRHFGSQVLVLSVDARRTRPGSEPTASGFEVTTHGGRQGTGIDAIEWAREAADRGVGEILLNSIDADGTKDGFDIELIRLVRAAVRVPIIASGGAGKPEHFPPAVAAGADAVLAASIFHFGPVDMISQVKTAIREAGFEVR</sequence>
<gene>
    <name evidence="1" type="primary">hisF</name>
    <name type="ordered locus">Arth_1681</name>
</gene>
<organism>
    <name type="scientific">Arthrobacter sp. (strain FB24)</name>
    <dbReference type="NCBI Taxonomy" id="290399"/>
    <lineage>
        <taxon>Bacteria</taxon>
        <taxon>Bacillati</taxon>
        <taxon>Actinomycetota</taxon>
        <taxon>Actinomycetes</taxon>
        <taxon>Micrococcales</taxon>
        <taxon>Micrococcaceae</taxon>
        <taxon>Arthrobacter</taxon>
    </lineage>
</organism>
<keyword id="KW-0028">Amino-acid biosynthesis</keyword>
<keyword id="KW-0963">Cytoplasm</keyword>
<keyword id="KW-0368">Histidine biosynthesis</keyword>
<keyword id="KW-0456">Lyase</keyword>
<keyword id="KW-1185">Reference proteome</keyword>
<reference key="1">
    <citation type="journal article" date="2013" name="Stand. Genomic Sci.">
        <title>Complete genome sequence of Arthrobacter sp. strain FB24.</title>
        <authorList>
            <person name="Nakatsu C.H."/>
            <person name="Barabote R."/>
            <person name="Thompson S."/>
            <person name="Bruce D."/>
            <person name="Detter C."/>
            <person name="Brettin T."/>
            <person name="Han C."/>
            <person name="Beasley F."/>
            <person name="Chen W."/>
            <person name="Konopka A."/>
            <person name="Xie G."/>
        </authorList>
    </citation>
    <scope>NUCLEOTIDE SEQUENCE [LARGE SCALE GENOMIC DNA]</scope>
    <source>
        <strain>FB24</strain>
    </source>
</reference>
<dbReference type="EC" id="4.3.2.10" evidence="1"/>
<dbReference type="EMBL" id="CP000454">
    <property type="protein sequence ID" value="ABK03075.1"/>
    <property type="molecule type" value="Genomic_DNA"/>
</dbReference>
<dbReference type="RefSeq" id="WP_011691541.1">
    <property type="nucleotide sequence ID" value="NC_008541.1"/>
</dbReference>
<dbReference type="SMR" id="A0JVK5"/>
<dbReference type="STRING" id="290399.Arth_1681"/>
<dbReference type="KEGG" id="art:Arth_1681"/>
<dbReference type="eggNOG" id="COG0107">
    <property type="taxonomic scope" value="Bacteria"/>
</dbReference>
<dbReference type="HOGENOM" id="CLU_048577_4_0_11"/>
<dbReference type="OrthoDB" id="9781903at2"/>
<dbReference type="UniPathway" id="UPA00031">
    <property type="reaction ID" value="UER00010"/>
</dbReference>
<dbReference type="Proteomes" id="UP000000754">
    <property type="component" value="Chromosome"/>
</dbReference>
<dbReference type="GO" id="GO:0005737">
    <property type="term" value="C:cytoplasm"/>
    <property type="evidence" value="ECO:0007669"/>
    <property type="project" value="UniProtKB-SubCell"/>
</dbReference>
<dbReference type="GO" id="GO:0000107">
    <property type="term" value="F:imidazoleglycerol-phosphate synthase activity"/>
    <property type="evidence" value="ECO:0007669"/>
    <property type="project" value="UniProtKB-UniRule"/>
</dbReference>
<dbReference type="GO" id="GO:0016829">
    <property type="term" value="F:lyase activity"/>
    <property type="evidence" value="ECO:0007669"/>
    <property type="project" value="UniProtKB-KW"/>
</dbReference>
<dbReference type="GO" id="GO:0000105">
    <property type="term" value="P:L-histidine biosynthetic process"/>
    <property type="evidence" value="ECO:0007669"/>
    <property type="project" value="UniProtKB-UniRule"/>
</dbReference>
<dbReference type="CDD" id="cd04731">
    <property type="entry name" value="HisF"/>
    <property type="match status" value="1"/>
</dbReference>
<dbReference type="FunFam" id="3.20.20.70:FF:000006">
    <property type="entry name" value="Imidazole glycerol phosphate synthase subunit HisF"/>
    <property type="match status" value="1"/>
</dbReference>
<dbReference type="Gene3D" id="3.20.20.70">
    <property type="entry name" value="Aldolase class I"/>
    <property type="match status" value="1"/>
</dbReference>
<dbReference type="HAMAP" id="MF_01013">
    <property type="entry name" value="HisF"/>
    <property type="match status" value="1"/>
</dbReference>
<dbReference type="InterPro" id="IPR013785">
    <property type="entry name" value="Aldolase_TIM"/>
</dbReference>
<dbReference type="InterPro" id="IPR006062">
    <property type="entry name" value="His_biosynth"/>
</dbReference>
<dbReference type="InterPro" id="IPR004651">
    <property type="entry name" value="HisF"/>
</dbReference>
<dbReference type="InterPro" id="IPR050064">
    <property type="entry name" value="IGPS_HisA/HisF"/>
</dbReference>
<dbReference type="InterPro" id="IPR011060">
    <property type="entry name" value="RibuloseP-bd_barrel"/>
</dbReference>
<dbReference type="NCBIfam" id="TIGR00735">
    <property type="entry name" value="hisF"/>
    <property type="match status" value="1"/>
</dbReference>
<dbReference type="PANTHER" id="PTHR21235:SF2">
    <property type="entry name" value="IMIDAZOLE GLYCEROL PHOSPHATE SYNTHASE HISHF"/>
    <property type="match status" value="1"/>
</dbReference>
<dbReference type="PANTHER" id="PTHR21235">
    <property type="entry name" value="IMIDAZOLE GLYCEROL PHOSPHATE SYNTHASE SUBUNIT HISF/H IGP SYNTHASE SUBUNIT HISF/H"/>
    <property type="match status" value="1"/>
</dbReference>
<dbReference type="Pfam" id="PF00977">
    <property type="entry name" value="His_biosynth"/>
    <property type="match status" value="1"/>
</dbReference>
<dbReference type="SUPFAM" id="SSF51366">
    <property type="entry name" value="Ribulose-phoshate binding barrel"/>
    <property type="match status" value="1"/>
</dbReference>